<keyword id="KW-0378">Hydrolase</keyword>
<keyword id="KW-0511">Multifunctional enzyme</keyword>
<keyword id="KW-0658">Purine biosynthesis</keyword>
<keyword id="KW-1185">Reference proteome</keyword>
<keyword id="KW-0808">Transferase</keyword>
<dbReference type="EC" id="2.1.2.3" evidence="1"/>
<dbReference type="EC" id="3.5.4.10" evidence="1"/>
<dbReference type="EMBL" id="CP000774">
    <property type="protein sequence ID" value="ABS62939.1"/>
    <property type="molecule type" value="Genomic_DNA"/>
</dbReference>
<dbReference type="RefSeq" id="WP_012110213.1">
    <property type="nucleotide sequence ID" value="NC_009719.1"/>
</dbReference>
<dbReference type="SMR" id="A7HSQ6"/>
<dbReference type="STRING" id="402881.Plav_1319"/>
<dbReference type="KEGG" id="pla:Plav_1319"/>
<dbReference type="eggNOG" id="COG0138">
    <property type="taxonomic scope" value="Bacteria"/>
</dbReference>
<dbReference type="HOGENOM" id="CLU_016316_5_2_5"/>
<dbReference type="OrthoDB" id="9802065at2"/>
<dbReference type="UniPathway" id="UPA00074">
    <property type="reaction ID" value="UER00133"/>
</dbReference>
<dbReference type="UniPathway" id="UPA00074">
    <property type="reaction ID" value="UER00135"/>
</dbReference>
<dbReference type="Proteomes" id="UP000006377">
    <property type="component" value="Chromosome"/>
</dbReference>
<dbReference type="GO" id="GO:0005829">
    <property type="term" value="C:cytosol"/>
    <property type="evidence" value="ECO:0007669"/>
    <property type="project" value="TreeGrafter"/>
</dbReference>
<dbReference type="GO" id="GO:0003937">
    <property type="term" value="F:IMP cyclohydrolase activity"/>
    <property type="evidence" value="ECO:0007669"/>
    <property type="project" value="UniProtKB-UniRule"/>
</dbReference>
<dbReference type="GO" id="GO:0004643">
    <property type="term" value="F:phosphoribosylaminoimidazolecarboxamide formyltransferase activity"/>
    <property type="evidence" value="ECO:0007669"/>
    <property type="project" value="UniProtKB-UniRule"/>
</dbReference>
<dbReference type="GO" id="GO:0006189">
    <property type="term" value="P:'de novo' IMP biosynthetic process"/>
    <property type="evidence" value="ECO:0007669"/>
    <property type="project" value="UniProtKB-UniRule"/>
</dbReference>
<dbReference type="CDD" id="cd01421">
    <property type="entry name" value="IMPCH"/>
    <property type="match status" value="1"/>
</dbReference>
<dbReference type="FunFam" id="3.40.140.20:FF:000001">
    <property type="entry name" value="Bifunctional purine biosynthesis protein PurH"/>
    <property type="match status" value="1"/>
</dbReference>
<dbReference type="FunFam" id="3.40.140.20:FF:000002">
    <property type="entry name" value="Bifunctional purine biosynthesis protein PurH"/>
    <property type="match status" value="1"/>
</dbReference>
<dbReference type="FunFam" id="3.40.50.1380:FF:000001">
    <property type="entry name" value="Bifunctional purine biosynthesis protein PurH"/>
    <property type="match status" value="1"/>
</dbReference>
<dbReference type="Gene3D" id="3.40.140.20">
    <property type="match status" value="2"/>
</dbReference>
<dbReference type="Gene3D" id="3.40.50.1380">
    <property type="entry name" value="Methylglyoxal synthase-like domain"/>
    <property type="match status" value="1"/>
</dbReference>
<dbReference type="HAMAP" id="MF_00139">
    <property type="entry name" value="PurH"/>
    <property type="match status" value="1"/>
</dbReference>
<dbReference type="InterPro" id="IPR024051">
    <property type="entry name" value="AICAR_Tfase_dup_dom_sf"/>
</dbReference>
<dbReference type="InterPro" id="IPR016193">
    <property type="entry name" value="Cytidine_deaminase-like"/>
</dbReference>
<dbReference type="InterPro" id="IPR011607">
    <property type="entry name" value="MGS-like_dom"/>
</dbReference>
<dbReference type="InterPro" id="IPR036914">
    <property type="entry name" value="MGS-like_dom_sf"/>
</dbReference>
<dbReference type="InterPro" id="IPR002695">
    <property type="entry name" value="PurH-like"/>
</dbReference>
<dbReference type="NCBIfam" id="NF002049">
    <property type="entry name" value="PRK00881.1"/>
    <property type="match status" value="1"/>
</dbReference>
<dbReference type="NCBIfam" id="TIGR00355">
    <property type="entry name" value="purH"/>
    <property type="match status" value="1"/>
</dbReference>
<dbReference type="PANTHER" id="PTHR11692:SF0">
    <property type="entry name" value="BIFUNCTIONAL PURINE BIOSYNTHESIS PROTEIN ATIC"/>
    <property type="match status" value="1"/>
</dbReference>
<dbReference type="PANTHER" id="PTHR11692">
    <property type="entry name" value="BIFUNCTIONAL PURINE BIOSYNTHESIS PROTEIN PURH"/>
    <property type="match status" value="1"/>
</dbReference>
<dbReference type="Pfam" id="PF01808">
    <property type="entry name" value="AICARFT_IMPCHas"/>
    <property type="match status" value="1"/>
</dbReference>
<dbReference type="Pfam" id="PF02142">
    <property type="entry name" value="MGS"/>
    <property type="match status" value="1"/>
</dbReference>
<dbReference type="PIRSF" id="PIRSF000414">
    <property type="entry name" value="AICARFT_IMPCHas"/>
    <property type="match status" value="1"/>
</dbReference>
<dbReference type="SMART" id="SM00798">
    <property type="entry name" value="AICARFT_IMPCHas"/>
    <property type="match status" value="1"/>
</dbReference>
<dbReference type="SMART" id="SM00851">
    <property type="entry name" value="MGS"/>
    <property type="match status" value="1"/>
</dbReference>
<dbReference type="SUPFAM" id="SSF53927">
    <property type="entry name" value="Cytidine deaminase-like"/>
    <property type="match status" value="1"/>
</dbReference>
<dbReference type="SUPFAM" id="SSF52335">
    <property type="entry name" value="Methylglyoxal synthase-like"/>
    <property type="match status" value="1"/>
</dbReference>
<dbReference type="PROSITE" id="PS51855">
    <property type="entry name" value="MGS"/>
    <property type="match status" value="1"/>
</dbReference>
<accession>A7HSQ6</accession>
<proteinExistence type="inferred from homology"/>
<comment type="catalytic activity">
    <reaction evidence="1">
        <text>(6R)-10-formyltetrahydrofolate + 5-amino-1-(5-phospho-beta-D-ribosyl)imidazole-4-carboxamide = 5-formamido-1-(5-phospho-D-ribosyl)imidazole-4-carboxamide + (6S)-5,6,7,8-tetrahydrofolate</text>
        <dbReference type="Rhea" id="RHEA:22192"/>
        <dbReference type="ChEBI" id="CHEBI:57453"/>
        <dbReference type="ChEBI" id="CHEBI:58467"/>
        <dbReference type="ChEBI" id="CHEBI:58475"/>
        <dbReference type="ChEBI" id="CHEBI:195366"/>
        <dbReference type="EC" id="2.1.2.3"/>
    </reaction>
</comment>
<comment type="catalytic activity">
    <reaction evidence="1">
        <text>IMP + H2O = 5-formamido-1-(5-phospho-D-ribosyl)imidazole-4-carboxamide</text>
        <dbReference type="Rhea" id="RHEA:18445"/>
        <dbReference type="ChEBI" id="CHEBI:15377"/>
        <dbReference type="ChEBI" id="CHEBI:58053"/>
        <dbReference type="ChEBI" id="CHEBI:58467"/>
        <dbReference type="EC" id="3.5.4.10"/>
    </reaction>
</comment>
<comment type="pathway">
    <text evidence="1">Purine metabolism; IMP biosynthesis via de novo pathway; 5-formamido-1-(5-phospho-D-ribosyl)imidazole-4-carboxamide from 5-amino-1-(5-phospho-D-ribosyl)imidazole-4-carboxamide (10-formyl THF route): step 1/1.</text>
</comment>
<comment type="pathway">
    <text evidence="1">Purine metabolism; IMP biosynthesis via de novo pathway; IMP from 5-formamido-1-(5-phospho-D-ribosyl)imidazole-4-carboxamide: step 1/1.</text>
</comment>
<comment type="domain">
    <text evidence="1">The IMP cyclohydrolase activity resides in the N-terminal region.</text>
</comment>
<comment type="similarity">
    <text evidence="1">Belongs to the PurH family.</text>
</comment>
<organism>
    <name type="scientific">Parvibaculum lavamentivorans (strain DS-1 / DSM 13023 / NCIMB 13966)</name>
    <dbReference type="NCBI Taxonomy" id="402881"/>
    <lineage>
        <taxon>Bacteria</taxon>
        <taxon>Pseudomonadati</taxon>
        <taxon>Pseudomonadota</taxon>
        <taxon>Alphaproteobacteria</taxon>
        <taxon>Hyphomicrobiales</taxon>
        <taxon>Parvibaculaceae</taxon>
        <taxon>Parvibaculum</taxon>
    </lineage>
</organism>
<name>PUR9_PARL1</name>
<reference key="1">
    <citation type="journal article" date="2011" name="Stand. Genomic Sci.">
        <title>Complete genome sequence of Parvibaculum lavamentivorans type strain (DS-1(T)).</title>
        <authorList>
            <person name="Schleheck D."/>
            <person name="Weiss M."/>
            <person name="Pitluck S."/>
            <person name="Bruce D."/>
            <person name="Land M.L."/>
            <person name="Han S."/>
            <person name="Saunders E."/>
            <person name="Tapia R."/>
            <person name="Detter C."/>
            <person name="Brettin T."/>
            <person name="Han J."/>
            <person name="Woyke T."/>
            <person name="Goodwin L."/>
            <person name="Pennacchio L."/>
            <person name="Nolan M."/>
            <person name="Cook A.M."/>
            <person name="Kjelleberg S."/>
            <person name="Thomas T."/>
        </authorList>
    </citation>
    <scope>NUCLEOTIDE SEQUENCE [LARGE SCALE GENOMIC DNA]</scope>
    <source>
        <strain>DS-1 / DSM 13023 / NCIMB 13966</strain>
    </source>
</reference>
<feature type="chain" id="PRO_1000096078" description="Bifunctional purine biosynthesis protein PurH">
    <location>
        <begin position="1"/>
        <end position="537"/>
    </location>
</feature>
<feature type="domain" description="MGS-like" evidence="2">
    <location>
        <begin position="11"/>
        <end position="158"/>
    </location>
</feature>
<protein>
    <recommendedName>
        <fullName evidence="1">Bifunctional purine biosynthesis protein PurH</fullName>
    </recommendedName>
    <domain>
        <recommendedName>
            <fullName evidence="1">Phosphoribosylaminoimidazolecarboxamide formyltransferase</fullName>
            <ecNumber evidence="1">2.1.2.3</ecNumber>
        </recommendedName>
        <alternativeName>
            <fullName evidence="1">AICAR transformylase</fullName>
        </alternativeName>
    </domain>
    <domain>
        <recommendedName>
            <fullName evidence="1">IMP cyclohydrolase</fullName>
            <ecNumber evidence="1">3.5.4.10</ecNumber>
        </recommendedName>
        <alternativeName>
            <fullName evidence="1">ATIC</fullName>
        </alternativeName>
        <alternativeName>
            <fullName evidence="1">IMP synthase</fullName>
        </alternativeName>
        <alternativeName>
            <fullName evidence="1">Inosinicase</fullName>
        </alternativeName>
    </domain>
</protein>
<gene>
    <name evidence="1" type="primary">purH</name>
    <name type="ordered locus">Plav_1319</name>
</gene>
<evidence type="ECO:0000255" key="1">
    <source>
        <dbReference type="HAMAP-Rule" id="MF_00139"/>
    </source>
</evidence>
<evidence type="ECO:0000255" key="2">
    <source>
        <dbReference type="PROSITE-ProRule" id="PRU01202"/>
    </source>
</evidence>
<sequence length="537" mass="56441">MTSSKSHPEAADIQRVRRALLSVSDKTGLIDFARALHGAGVELISTGGTAKAIKDAALPVKDVADLTGFPEMMDGRVKTLHPKVHGGLLAVRDDAEHAAAMKEHGIAGIDLLCVNLYPFEATVAKGAAYDECVENIDIGGPAMIRAAAKNHAYVGVIVDGADYAAVIEEITGKGGTSLVLRKRLAQKAYARTAAYDAAISNWFANAIGETAPDYRAFGGSLKQTLRYGENPHQVASFYVTGENRPGVSNAEQLQGKELSYNNINDTDAAFELVGEFDPKLAPAIAIIKHANPCGVATGATLADAYRKALACDPVSAFGGIIAANRPLDGETAEEIARIFTEVIIAPEADEDARRIIGAKKNLRLLITHGLPDPATAGLFYKSVAGGLLVQSRDNGRVDTLDLKVVTKRAPTAQEMEDLKFAFRVCKHVKSNAIIYVKNGATVGIGAGQMSRVDSARIAARKAQDAAEAAGEKTPATIGSVVASDAFFPFADGLLSAAEAGATAVIQPGGSVRDDEVIAAADEKGLAMVMTGMRHFRH</sequence>